<protein>
    <recommendedName>
        <fullName evidence="10">Large ribosomal subunit protein eL42B</fullName>
    </recommendedName>
    <alternativeName>
        <fullName evidence="11">60S ribosomal protein L42-B</fullName>
    </alternativeName>
    <alternativeName>
        <fullName>L41</fullName>
    </alternativeName>
    <alternativeName>
        <fullName>Maintenance of killer protein 18</fullName>
    </alternativeName>
    <alternativeName>
        <fullName>YL27</fullName>
    </alternativeName>
    <alternativeName>
        <fullName>YP44</fullName>
    </alternativeName>
</protein>
<sequence>MVNVPKTRKTYCKGKTCRKHTQHKVTQYKAGKASLFAQGKRRYDRKQSGFGGQTKPVFHKKAKTTKKVVLRLECVKCKTRAQLTLKRCKHFELGGEKKQKGQALQF</sequence>
<keyword id="KW-0002">3D-structure</keyword>
<keyword id="KW-0046">Antibiotic resistance</keyword>
<keyword id="KW-0196">Cycloheximide resistance</keyword>
<keyword id="KW-0963">Cytoplasm</keyword>
<keyword id="KW-0903">Direct protein sequencing</keyword>
<keyword id="KW-0488">Methylation</keyword>
<keyword id="KW-1185">Reference proteome</keyword>
<keyword id="KW-0687">Ribonucleoprotein</keyword>
<keyword id="KW-0689">Ribosomal protein</keyword>
<gene>
    <name evidence="11" type="primary">RPL42B</name>
    <name type="synonym">MAK18</name>
    <name type="synonym">RPL41B</name>
    <name type="synonym">SCL41B</name>
    <name type="ordered locus">YHR141C</name>
</gene>
<dbReference type="EMBL" id="D10579">
    <property type="protein sequence ID" value="BAA01436.1"/>
    <property type="molecule type" value="Genomic_DNA"/>
</dbReference>
<dbReference type="EMBL" id="U10398">
    <property type="protein sequence ID" value="AAB68420.1"/>
    <property type="molecule type" value="Genomic_DNA"/>
</dbReference>
<dbReference type="EMBL" id="BK006934">
    <property type="protein sequence ID" value="DAA06834.1"/>
    <property type="molecule type" value="Genomic_DNA"/>
</dbReference>
<dbReference type="PIR" id="C43301">
    <property type="entry name" value="R6BY44"/>
</dbReference>
<dbReference type="RefSeq" id="NP_012010.1">
    <property type="nucleotide sequence ID" value="NM_001179271.1"/>
</dbReference>
<dbReference type="PDB" id="5M1J">
    <property type="method" value="EM"/>
    <property type="resolution" value="3.30 A"/>
    <property type="chains" value="o5=2-106"/>
</dbReference>
<dbReference type="PDBsum" id="5M1J"/>
<dbReference type="EMDB" id="EMD-4140"/>
<dbReference type="SMR" id="P0CX28"/>
<dbReference type="BioGRID" id="35667">
    <property type="interactions" value="114"/>
</dbReference>
<dbReference type="BioGRID" id="36574">
    <property type="interactions" value="45"/>
</dbReference>
<dbReference type="FunCoup" id="P0CX28">
    <property type="interactions" value="859"/>
</dbReference>
<dbReference type="IntAct" id="P0CX28">
    <property type="interactions" value="7"/>
</dbReference>
<dbReference type="iPTMnet" id="P0CX28"/>
<dbReference type="EnsemblFungi" id="YHR141C_mRNA">
    <property type="protein sequence ID" value="YHR141C"/>
    <property type="gene ID" value="YHR141C"/>
</dbReference>
<dbReference type="EnsemblFungi" id="YNL162W_mRNA">
    <property type="protein sequence ID" value="YNL162W"/>
    <property type="gene ID" value="YNL162W"/>
</dbReference>
<dbReference type="GeneID" id="856544"/>
<dbReference type="KEGG" id="sce:YHR141C"/>
<dbReference type="KEGG" id="sce:YNL162W"/>
<dbReference type="AGR" id="SGD:S000001183"/>
<dbReference type="SGD" id="S000001183">
    <property type="gene designation" value="RPL42B"/>
</dbReference>
<dbReference type="VEuPathDB" id="FungiDB:YHR141C"/>
<dbReference type="VEuPathDB" id="FungiDB:YNL162W"/>
<dbReference type="GeneTree" id="ENSGT00940000165687"/>
<dbReference type="HOGENOM" id="CLU_114645_2_1_1"/>
<dbReference type="InParanoid" id="P0CX28"/>
<dbReference type="OMA" id="CKKHTIH"/>
<dbReference type="OrthoDB" id="2967263at2759"/>
<dbReference type="BioCyc" id="YEAST:G3O-31177-MONOMER"/>
<dbReference type="Reactome" id="R-SCE-156827">
    <property type="pathway name" value="L13a-mediated translational silencing of Ceruloplasmin expression"/>
</dbReference>
<dbReference type="Reactome" id="R-SCE-1799339">
    <property type="pathway name" value="SRP-dependent cotranslational protein targeting to membrane"/>
</dbReference>
<dbReference type="Reactome" id="R-SCE-72689">
    <property type="pathway name" value="Formation of a pool of free 40S subunits"/>
</dbReference>
<dbReference type="Reactome" id="R-SCE-72706">
    <property type="pathway name" value="GTP hydrolysis and joining of the 60S ribosomal subunit"/>
</dbReference>
<dbReference type="Reactome" id="R-SCE-975956">
    <property type="pathway name" value="Nonsense Mediated Decay (NMD) independent of the Exon Junction Complex (EJC)"/>
</dbReference>
<dbReference type="Reactome" id="R-SCE-975957">
    <property type="pathway name" value="Nonsense Mediated Decay (NMD) enhanced by the Exon Junction Complex (EJC)"/>
</dbReference>
<dbReference type="BioGRID-ORCS" id="855560">
    <property type="hits" value="10 hits in 10 CRISPR screens"/>
</dbReference>
<dbReference type="BioGRID-ORCS" id="856544">
    <property type="hits" value="1 hit in 10 CRISPR screens"/>
</dbReference>
<dbReference type="PRO" id="PR:P0CX28"/>
<dbReference type="Proteomes" id="UP000002311">
    <property type="component" value="Chromosome VIII"/>
</dbReference>
<dbReference type="RNAct" id="P0CX28">
    <property type="molecule type" value="protein"/>
</dbReference>
<dbReference type="ExpressionAtlas" id="P0CX28">
    <property type="expression patterns" value="baseline and differential"/>
</dbReference>
<dbReference type="GO" id="GO:0005829">
    <property type="term" value="C:cytosol"/>
    <property type="evidence" value="ECO:0000304"/>
    <property type="project" value="Reactome"/>
</dbReference>
<dbReference type="GO" id="GO:0022625">
    <property type="term" value="C:cytosolic large ribosomal subunit"/>
    <property type="evidence" value="ECO:0000314"/>
    <property type="project" value="SGD"/>
</dbReference>
<dbReference type="GO" id="GO:0003735">
    <property type="term" value="F:structural constituent of ribosome"/>
    <property type="evidence" value="ECO:0000305"/>
    <property type="project" value="SGD"/>
</dbReference>
<dbReference type="GO" id="GO:0002181">
    <property type="term" value="P:cytoplasmic translation"/>
    <property type="evidence" value="ECO:0000305"/>
    <property type="project" value="SGD"/>
</dbReference>
<dbReference type="GO" id="GO:0046677">
    <property type="term" value="P:response to antibiotic"/>
    <property type="evidence" value="ECO:0007669"/>
    <property type="project" value="UniProtKB-KW"/>
</dbReference>
<dbReference type="GO" id="GO:0046898">
    <property type="term" value="P:response to cycloheximide"/>
    <property type="evidence" value="ECO:0007669"/>
    <property type="project" value="UniProtKB-KW"/>
</dbReference>
<dbReference type="FunFam" id="3.10.450.80:FF:000001">
    <property type="entry name" value="60S ribosomal protein L44"/>
    <property type="match status" value="1"/>
</dbReference>
<dbReference type="Gene3D" id="3.10.450.80">
    <property type="match status" value="1"/>
</dbReference>
<dbReference type="InterPro" id="IPR000552">
    <property type="entry name" value="Ribosomal_eL44"/>
</dbReference>
<dbReference type="InterPro" id="IPR053708">
    <property type="entry name" value="Ribosomal_LSU_eL42"/>
</dbReference>
<dbReference type="InterPro" id="IPR011332">
    <property type="entry name" value="Ribosomal_zn-bd"/>
</dbReference>
<dbReference type="PANTHER" id="PTHR10369">
    <property type="entry name" value="60S RIBOSOMAL PROTEIN L36A/L44"/>
    <property type="match status" value="1"/>
</dbReference>
<dbReference type="Pfam" id="PF00935">
    <property type="entry name" value="Ribosomal_L44"/>
    <property type="match status" value="1"/>
</dbReference>
<dbReference type="SUPFAM" id="SSF57829">
    <property type="entry name" value="Zn-binding ribosomal proteins"/>
    <property type="match status" value="1"/>
</dbReference>
<dbReference type="PROSITE" id="PS01172">
    <property type="entry name" value="RIBOSOMAL_L44E"/>
    <property type="match status" value="1"/>
</dbReference>
<reference key="1">
    <citation type="journal article" date="1992" name="J. Bacteriol.">
        <title>Drastic alteration of cycloheximide sensitivity by substitution of one amino acid in the L41 ribosomal protein of yeasts.</title>
        <authorList>
            <person name="Kawai S."/>
            <person name="Murao S."/>
            <person name="Mochizuki M."/>
            <person name="Shibuya I."/>
            <person name="Yano K."/>
            <person name="Takagi M."/>
        </authorList>
    </citation>
    <scope>NUCLEOTIDE SEQUENCE [GENOMIC DNA]</scope>
    <scope>VARIANT GLN-56</scope>
</reference>
<reference key="2">
    <citation type="journal article" date="1994" name="Science">
        <title>Complete nucleotide sequence of Saccharomyces cerevisiae chromosome VIII.</title>
        <authorList>
            <person name="Johnston M."/>
            <person name="Andrews S."/>
            <person name="Brinkman R."/>
            <person name="Cooper J."/>
            <person name="Ding H."/>
            <person name="Dover J."/>
            <person name="Du Z."/>
            <person name="Favello A."/>
            <person name="Fulton L."/>
            <person name="Gattung S."/>
            <person name="Geisel C."/>
            <person name="Kirsten J."/>
            <person name="Kucaba T."/>
            <person name="Hillier L.W."/>
            <person name="Jier M."/>
            <person name="Johnston L."/>
            <person name="Langston Y."/>
            <person name="Latreille P."/>
            <person name="Louis E.J."/>
            <person name="Macri C."/>
            <person name="Mardis E."/>
            <person name="Menezes S."/>
            <person name="Mouser L."/>
            <person name="Nhan M."/>
            <person name="Rifkin L."/>
            <person name="Riles L."/>
            <person name="St Peter H."/>
            <person name="Trevaskis E."/>
            <person name="Vaughan K."/>
            <person name="Vignati D."/>
            <person name="Wilcox L."/>
            <person name="Wohldman P."/>
            <person name="Waterston R."/>
            <person name="Wilson R."/>
            <person name="Vaudin M."/>
        </authorList>
    </citation>
    <scope>NUCLEOTIDE SEQUENCE [LARGE SCALE GENOMIC DNA]</scope>
    <source>
        <strain>ATCC 204508 / S288c</strain>
    </source>
</reference>
<reference key="3">
    <citation type="journal article" date="2014" name="G3 (Bethesda)">
        <title>The reference genome sequence of Saccharomyces cerevisiae: Then and now.</title>
        <authorList>
            <person name="Engel S.R."/>
            <person name="Dietrich F.S."/>
            <person name="Fisk D.G."/>
            <person name="Binkley G."/>
            <person name="Balakrishnan R."/>
            <person name="Costanzo M.C."/>
            <person name="Dwight S.S."/>
            <person name="Hitz B.C."/>
            <person name="Karra K."/>
            <person name="Nash R.S."/>
            <person name="Weng S."/>
            <person name="Wong E.D."/>
            <person name="Lloyd P."/>
            <person name="Skrzypek M.S."/>
            <person name="Miyasato S.R."/>
            <person name="Simison M."/>
            <person name="Cherry J.M."/>
        </authorList>
    </citation>
    <scope>GENOME REANNOTATION</scope>
    <source>
        <strain>ATCC 204508 / S288c</strain>
    </source>
</reference>
<reference key="4">
    <citation type="journal article" date="1978" name="FEBS Lett.">
        <title>The primary structure of protein 44 from the large subunit of yeast ribosomes.</title>
        <authorList>
            <person name="Itoh T."/>
            <person name="Wittmann-Liebold B."/>
        </authorList>
    </citation>
    <scope>PROTEIN SEQUENCE OF 2-106</scope>
</reference>
<reference key="5">
    <citation type="journal article" date="1995" name="J. Bacteriol.">
        <title>Translation and M1 double-stranded RNA propagation: MAK18 = RPL41B and cycloheximide curing.</title>
        <authorList>
            <person name="Carroll K."/>
            <person name="Wickner R.B."/>
        </authorList>
    </citation>
    <scope>IDENTIFICATION AS MAK18</scope>
</reference>
<reference key="6">
    <citation type="journal article" date="1998" name="Yeast">
        <title>The list of cytoplasmic ribosomal proteins of Saccharomyces cerevisiae.</title>
        <authorList>
            <person name="Planta R.J."/>
            <person name="Mager W.H."/>
        </authorList>
    </citation>
    <scope>NOMENCLATURE</scope>
    <scope>SUBUNIT</scope>
</reference>
<reference key="7">
    <citation type="journal article" date="2002" name="Proc. Natl. Acad. Sci. U.S.A.">
        <title>Direct mass spectrometric analysis of intact proteins of the yeast large ribosomal subunit using capillary LC/FTICR.</title>
        <authorList>
            <person name="Lee S.-W."/>
            <person name="Berger S.J."/>
            <person name="Martinovic S."/>
            <person name="Pasa-Tolic L."/>
            <person name="Anderson G.A."/>
            <person name="Shen Y."/>
            <person name="Zhao R."/>
            <person name="Smith R.D."/>
        </authorList>
    </citation>
    <scope>MASS SPECTROMETRY</scope>
</reference>
<reference key="8">
    <citation type="journal article" date="2003" name="Nature">
        <title>Global analysis of protein localization in budding yeast.</title>
        <authorList>
            <person name="Huh W.-K."/>
            <person name="Falvo J.V."/>
            <person name="Gerke L.C."/>
            <person name="Carroll A.S."/>
            <person name="Howson R.W."/>
            <person name="Weissman J.S."/>
            <person name="O'Shea E.K."/>
        </authorList>
    </citation>
    <scope>SUBCELLULAR LOCATION [LARGE SCALE ANALYSIS]</scope>
</reference>
<reference key="9">
    <citation type="journal article" date="2003" name="Nature">
        <title>Global analysis of protein expression in yeast.</title>
        <authorList>
            <person name="Ghaemmaghami S."/>
            <person name="Huh W.-K."/>
            <person name="Bower K."/>
            <person name="Howson R.W."/>
            <person name="Belle A."/>
            <person name="Dephoure N."/>
            <person name="O'Shea E.K."/>
            <person name="Weissman J.S."/>
        </authorList>
    </citation>
    <scope>LEVEL OF PROTEIN EXPRESSION [LARGE SCALE ANALYSIS]</scope>
</reference>
<reference key="10">
    <citation type="journal article" date="2008" name="J. Biol. Chem.">
        <title>Identification of two SET domain proteins required for methylation of lysine residues in yeast ribosomal protein Rpl42ab.</title>
        <authorList>
            <person name="Webb K.J."/>
            <person name="Laganowsky A."/>
            <person name="Whitelegge J.P."/>
            <person name="Clarke S.G."/>
        </authorList>
    </citation>
    <scope>METHYLATION AT LYS-40 AND LYS-55</scope>
    <scope>MASS SPECTROMETRY</scope>
</reference>
<reference key="11">
    <citation type="journal article" date="2011" name="Science">
        <title>The structure of the eukaryotic ribosome at 3.0 A resolution.</title>
        <authorList>
            <person name="Ben-Shem A."/>
            <person name="Garreau de Loubresse N."/>
            <person name="Melnikov S."/>
            <person name="Jenner L."/>
            <person name="Yusupova G."/>
            <person name="Yusupov M."/>
        </authorList>
    </citation>
    <scope>SUBUNIT</scope>
    <scope>SUBCELLULAR LOCATION</scope>
</reference>
<reference key="12">
    <citation type="journal article" date="2012" name="Proteomics">
        <title>Methylation of translation-associated proteins in Saccharomyces cerevisiae: Identification of methylated lysines and their methyltransferases.</title>
        <authorList>
            <person name="Couttas T.A."/>
            <person name="Raftery M.J."/>
            <person name="Padula M.P."/>
            <person name="Herbert B.R."/>
            <person name="Wilkins M.R."/>
        </authorList>
    </citation>
    <scope>METHYLATION AT LYS-40</scope>
</reference>
<reference key="13">
    <citation type="journal article" date="2014" name="Curr. Opin. Struct. Biol.">
        <title>A new system for naming ribosomal proteins.</title>
        <authorList>
            <person name="Ban N."/>
            <person name="Beckmann R."/>
            <person name="Cate J.H.D."/>
            <person name="Dinman J.D."/>
            <person name="Dragon F."/>
            <person name="Ellis S.R."/>
            <person name="Lafontaine D.L.J."/>
            <person name="Lindahl L."/>
            <person name="Liljas A."/>
            <person name="Lipton J.M."/>
            <person name="McAlear M.A."/>
            <person name="Moore P.B."/>
            <person name="Noller H.F."/>
            <person name="Ortega J."/>
            <person name="Panse V.G."/>
            <person name="Ramakrishnan V."/>
            <person name="Spahn C.M.T."/>
            <person name="Steitz T.A."/>
            <person name="Tchorzewski M."/>
            <person name="Tollervey D."/>
            <person name="Warren A.J."/>
            <person name="Williamson J.R."/>
            <person name="Wilson D."/>
            <person name="Yonath A."/>
            <person name="Yusupov M."/>
        </authorList>
    </citation>
    <scope>NOMENCLATURE</scope>
</reference>
<reference key="14">
    <citation type="journal article" date="2014" name="J. Proteome Res.">
        <title>Stoichiometry of Saccharomyces cerevisiae lysine methylation: insights into non-histone protein lysine methyltransferase activity.</title>
        <authorList>
            <person name="Hart-Smith G."/>
            <person name="Chia S.Z."/>
            <person name="Low J.K."/>
            <person name="McKay M.J."/>
            <person name="Molloy M.P."/>
            <person name="Wilkins M.R."/>
        </authorList>
    </citation>
    <scope>METHYLATION AT LYS-40 BY RKM3</scope>
    <scope>METHYLATION AT LYS-55 BY RKM4</scope>
</reference>
<feature type="initiator methionine" description="Removed" evidence="9">
    <location>
        <position position="1"/>
    </location>
</feature>
<feature type="chain" id="PRO_0000409760" description="Large ribosomal subunit protein eL42B">
    <location>
        <begin position="2"/>
        <end position="106"/>
    </location>
</feature>
<feature type="modified residue" description="N6-methyllysine; by RKM3" evidence="5 7 8">
    <location>
        <position position="40"/>
    </location>
</feature>
<feature type="modified residue" description="N6-methyllysine; by RKM4" evidence="5 8">
    <location>
        <position position="55"/>
    </location>
</feature>
<feature type="sequence variant" description="Confers resistance to cycloheximide, an inhibitor of polypeptide elongation." evidence="4">
    <original>P</original>
    <variation>Q</variation>
    <location>
        <position position="56"/>
    </location>
</feature>
<feature type="sequence conflict" description="In Ref. 4; AA sequence." evidence="12" ref="4">
    <original>KR</original>
    <variation>RK</variation>
    <location>
        <begin position="40"/>
        <end position="41"/>
    </location>
</feature>
<feature type="sequence conflict" description="In Ref. 4; AA sequence." evidence="12" ref="4">
    <location>
        <begin position="88"/>
        <end position="89"/>
    </location>
</feature>
<evidence type="ECO:0000269" key="1">
    <source>
    </source>
</evidence>
<evidence type="ECO:0000269" key="2">
    <source>
    </source>
</evidence>
<evidence type="ECO:0000269" key="3">
    <source>
    </source>
</evidence>
<evidence type="ECO:0000269" key="4">
    <source>
    </source>
</evidence>
<evidence type="ECO:0000269" key="5">
    <source>
    </source>
</evidence>
<evidence type="ECO:0000269" key="6">
    <source>
    </source>
</evidence>
<evidence type="ECO:0000269" key="7">
    <source>
    </source>
</evidence>
<evidence type="ECO:0000269" key="8">
    <source>
    </source>
</evidence>
<evidence type="ECO:0000269" key="9">
    <source>
    </source>
</evidence>
<evidence type="ECO:0000303" key="10">
    <source>
    </source>
</evidence>
<evidence type="ECO:0000303" key="11">
    <source>
    </source>
</evidence>
<evidence type="ECO:0000305" key="12"/>
<evidence type="ECO:0000305" key="13">
    <source>
    </source>
</evidence>
<evidence type="ECO:0000305" key="14">
    <source>
    </source>
</evidence>
<accession>P0CX28</accession>
<accession>D3DL90</accession>
<accession>P02405</accession>
<name>RL44B_YEAST</name>
<proteinExistence type="evidence at protein level"/>
<organism>
    <name type="scientific">Saccharomyces cerevisiae (strain ATCC 204508 / S288c)</name>
    <name type="common">Baker's yeast</name>
    <dbReference type="NCBI Taxonomy" id="559292"/>
    <lineage>
        <taxon>Eukaryota</taxon>
        <taxon>Fungi</taxon>
        <taxon>Dikarya</taxon>
        <taxon>Ascomycota</taxon>
        <taxon>Saccharomycotina</taxon>
        <taxon>Saccharomycetes</taxon>
        <taxon>Saccharomycetales</taxon>
        <taxon>Saccharomycetaceae</taxon>
        <taxon>Saccharomyces</taxon>
    </lineage>
</organism>
<comment type="function">
    <text evidence="13">Component of the ribosome, a large ribonucleoprotein complex responsible for the synthesis of proteins in the cell. The small ribosomal subunit (SSU) binds messenger RNAs (mRNAs) and translates the encoded message by selecting cognate aminoacyl-transfer RNA (tRNA) molecules. The large subunit (LSU) contains the ribosomal catalytic site termed the peptidyl transferase center (PTC), which catalyzes the formation of peptide bonds, thereby polymerizing the amino acids delivered by tRNAs into a polypeptide chain. The nascent polypeptides leave the ribosome through a tunnel in the LSU and interact with protein factors that function in enzymatic processing, targeting, and the membrane insertion of nascent chains at the exit of the ribosomal tunnel.</text>
</comment>
<comment type="subunit">
    <text evidence="6 14">Component of the large ribosomal subunit (LSU). Mature yeast ribosomes consist of a small (40S) and a large (60S) subunit. The 40S small subunit contains 1 molecule of ribosomal RNA (18S rRNA) and 33 different proteins (encoded by 57 genes). The large 60S subunit contains 3 rRNA molecules (25S, 5.8S and 5S rRNA) and 46 different proteins (encoded by 81 genes) (PubMed:22096102, PubMed:9559554).</text>
</comment>
<comment type="subcellular location">
    <subcellularLocation>
        <location evidence="2 6">Cytoplasm</location>
    </subcellularLocation>
</comment>
<comment type="PTM">
    <text evidence="8">In wild-type cells, 78% of L42 is monomethylated at both Lys-40 and Lys-55, and 22% are a mixture of species with either residue monomethylated.</text>
</comment>
<comment type="mass spectrometry">
    <text>Monoisotopic mass with 2 methylation modifications.</text>
</comment>
<comment type="mass spectrometry">
    <text>Monoisotopic mass with N6-methyl-Lys-40 and N6-methyl-Lys-55.</text>
</comment>
<comment type="mass spectrometry">
    <text>With N6-methyl-Lys-40 and N6-methyl-Lys-55.</text>
</comment>
<comment type="miscellaneous">
    <text evidence="3">Present with 3890 molecules/cell in log phase SD medium.</text>
</comment>
<comment type="miscellaneous">
    <text evidence="12">There are 2 genes for eL42 in yeast.</text>
</comment>
<comment type="similarity">
    <text evidence="12">Belongs to the eukaryotic ribosomal protein eL42 family.</text>
</comment>